<feature type="chain" id="PRO_0000282647" description="Transmembrane protein 177">
    <location>
        <begin position="1"/>
        <end position="311"/>
    </location>
</feature>
<feature type="topological domain" description="Mitochondrial matrix" evidence="3">
    <location>
        <begin position="1"/>
        <end position="17"/>
    </location>
</feature>
<feature type="transmembrane region" description="Helical" evidence="2">
    <location>
        <begin position="18"/>
        <end position="38"/>
    </location>
</feature>
<feature type="topological domain" description="Mitochondrial intermembrane" evidence="3">
    <location>
        <begin position="39"/>
        <end position="164"/>
    </location>
</feature>
<feature type="transmembrane region" description="Helical" evidence="2">
    <location>
        <begin position="165"/>
        <end position="185"/>
    </location>
</feature>
<feature type="topological domain" description="Mitochondrial matrix" evidence="3">
    <location>
        <begin position="186"/>
        <end position="190"/>
    </location>
</feature>
<feature type="transmembrane region" description="Helical" evidence="2">
    <location>
        <begin position="191"/>
        <end position="211"/>
    </location>
</feature>
<feature type="topological domain" description="Mitochondrial intermembrane" evidence="3">
    <location>
        <begin position="212"/>
        <end position="311"/>
    </location>
</feature>
<reference key="1">
    <citation type="journal article" date="2005" name="Science">
        <title>The transcriptional landscape of the mammalian genome.</title>
        <authorList>
            <person name="Carninci P."/>
            <person name="Kasukawa T."/>
            <person name="Katayama S."/>
            <person name="Gough J."/>
            <person name="Frith M.C."/>
            <person name="Maeda N."/>
            <person name="Oyama R."/>
            <person name="Ravasi T."/>
            <person name="Lenhard B."/>
            <person name="Wells C."/>
            <person name="Kodzius R."/>
            <person name="Shimokawa K."/>
            <person name="Bajic V.B."/>
            <person name="Brenner S.E."/>
            <person name="Batalov S."/>
            <person name="Forrest A.R."/>
            <person name="Zavolan M."/>
            <person name="Davis M.J."/>
            <person name="Wilming L.G."/>
            <person name="Aidinis V."/>
            <person name="Allen J.E."/>
            <person name="Ambesi-Impiombato A."/>
            <person name="Apweiler R."/>
            <person name="Aturaliya R.N."/>
            <person name="Bailey T.L."/>
            <person name="Bansal M."/>
            <person name="Baxter L."/>
            <person name="Beisel K.W."/>
            <person name="Bersano T."/>
            <person name="Bono H."/>
            <person name="Chalk A.M."/>
            <person name="Chiu K.P."/>
            <person name="Choudhary V."/>
            <person name="Christoffels A."/>
            <person name="Clutterbuck D.R."/>
            <person name="Crowe M.L."/>
            <person name="Dalla E."/>
            <person name="Dalrymple B.P."/>
            <person name="de Bono B."/>
            <person name="Della Gatta G."/>
            <person name="di Bernardo D."/>
            <person name="Down T."/>
            <person name="Engstrom P."/>
            <person name="Fagiolini M."/>
            <person name="Faulkner G."/>
            <person name="Fletcher C.F."/>
            <person name="Fukushima T."/>
            <person name="Furuno M."/>
            <person name="Futaki S."/>
            <person name="Gariboldi M."/>
            <person name="Georgii-Hemming P."/>
            <person name="Gingeras T.R."/>
            <person name="Gojobori T."/>
            <person name="Green R.E."/>
            <person name="Gustincich S."/>
            <person name="Harbers M."/>
            <person name="Hayashi Y."/>
            <person name="Hensch T.K."/>
            <person name="Hirokawa N."/>
            <person name="Hill D."/>
            <person name="Huminiecki L."/>
            <person name="Iacono M."/>
            <person name="Ikeo K."/>
            <person name="Iwama A."/>
            <person name="Ishikawa T."/>
            <person name="Jakt M."/>
            <person name="Kanapin A."/>
            <person name="Katoh M."/>
            <person name="Kawasawa Y."/>
            <person name="Kelso J."/>
            <person name="Kitamura H."/>
            <person name="Kitano H."/>
            <person name="Kollias G."/>
            <person name="Krishnan S.P."/>
            <person name="Kruger A."/>
            <person name="Kummerfeld S.K."/>
            <person name="Kurochkin I.V."/>
            <person name="Lareau L.F."/>
            <person name="Lazarevic D."/>
            <person name="Lipovich L."/>
            <person name="Liu J."/>
            <person name="Liuni S."/>
            <person name="McWilliam S."/>
            <person name="Madan Babu M."/>
            <person name="Madera M."/>
            <person name="Marchionni L."/>
            <person name="Matsuda H."/>
            <person name="Matsuzawa S."/>
            <person name="Miki H."/>
            <person name="Mignone F."/>
            <person name="Miyake S."/>
            <person name="Morris K."/>
            <person name="Mottagui-Tabar S."/>
            <person name="Mulder N."/>
            <person name="Nakano N."/>
            <person name="Nakauchi H."/>
            <person name="Ng P."/>
            <person name="Nilsson R."/>
            <person name="Nishiguchi S."/>
            <person name="Nishikawa S."/>
            <person name="Nori F."/>
            <person name="Ohara O."/>
            <person name="Okazaki Y."/>
            <person name="Orlando V."/>
            <person name="Pang K.C."/>
            <person name="Pavan W.J."/>
            <person name="Pavesi G."/>
            <person name="Pesole G."/>
            <person name="Petrovsky N."/>
            <person name="Piazza S."/>
            <person name="Reed J."/>
            <person name="Reid J.F."/>
            <person name="Ring B.Z."/>
            <person name="Ringwald M."/>
            <person name="Rost B."/>
            <person name="Ruan Y."/>
            <person name="Salzberg S.L."/>
            <person name="Sandelin A."/>
            <person name="Schneider C."/>
            <person name="Schoenbach C."/>
            <person name="Sekiguchi K."/>
            <person name="Semple C.A."/>
            <person name="Seno S."/>
            <person name="Sessa L."/>
            <person name="Sheng Y."/>
            <person name="Shibata Y."/>
            <person name="Shimada H."/>
            <person name="Shimada K."/>
            <person name="Silva D."/>
            <person name="Sinclair B."/>
            <person name="Sperling S."/>
            <person name="Stupka E."/>
            <person name="Sugiura K."/>
            <person name="Sultana R."/>
            <person name="Takenaka Y."/>
            <person name="Taki K."/>
            <person name="Tammoja K."/>
            <person name="Tan S.L."/>
            <person name="Tang S."/>
            <person name="Taylor M.S."/>
            <person name="Tegner J."/>
            <person name="Teichmann S.A."/>
            <person name="Ueda H.R."/>
            <person name="van Nimwegen E."/>
            <person name="Verardo R."/>
            <person name="Wei C.L."/>
            <person name="Yagi K."/>
            <person name="Yamanishi H."/>
            <person name="Zabarovsky E."/>
            <person name="Zhu S."/>
            <person name="Zimmer A."/>
            <person name="Hide W."/>
            <person name="Bult C."/>
            <person name="Grimmond S.M."/>
            <person name="Teasdale R.D."/>
            <person name="Liu E.T."/>
            <person name="Brusic V."/>
            <person name="Quackenbush J."/>
            <person name="Wahlestedt C."/>
            <person name="Mattick J.S."/>
            <person name="Hume D.A."/>
            <person name="Kai C."/>
            <person name="Sasaki D."/>
            <person name="Tomaru Y."/>
            <person name="Fukuda S."/>
            <person name="Kanamori-Katayama M."/>
            <person name="Suzuki M."/>
            <person name="Aoki J."/>
            <person name="Arakawa T."/>
            <person name="Iida J."/>
            <person name="Imamura K."/>
            <person name="Itoh M."/>
            <person name="Kato T."/>
            <person name="Kawaji H."/>
            <person name="Kawagashira N."/>
            <person name="Kawashima T."/>
            <person name="Kojima M."/>
            <person name="Kondo S."/>
            <person name="Konno H."/>
            <person name="Nakano K."/>
            <person name="Ninomiya N."/>
            <person name="Nishio T."/>
            <person name="Okada M."/>
            <person name="Plessy C."/>
            <person name="Shibata K."/>
            <person name="Shiraki T."/>
            <person name="Suzuki S."/>
            <person name="Tagami M."/>
            <person name="Waki K."/>
            <person name="Watahiki A."/>
            <person name="Okamura-Oho Y."/>
            <person name="Suzuki H."/>
            <person name="Kawai J."/>
            <person name="Hayashizaki Y."/>
        </authorList>
    </citation>
    <scope>NUCLEOTIDE SEQUENCE [LARGE SCALE MRNA]</scope>
    <source>
        <strain>C57BL/6J</strain>
    </source>
</reference>
<reference key="2">
    <citation type="journal article" date="2004" name="Genome Res.">
        <title>The status, quality, and expansion of the NIH full-length cDNA project: the Mammalian Gene Collection (MGC).</title>
        <authorList>
            <consortium name="The MGC Project Team"/>
        </authorList>
    </citation>
    <scope>NUCLEOTIDE SEQUENCE [LARGE SCALE MRNA]</scope>
    <source>
        <strain>C57BL/6J</strain>
        <tissue>Brain</tissue>
    </source>
</reference>
<reference key="3">
    <citation type="journal article" date="2010" name="Cell">
        <title>A tissue-specific atlas of mouse protein phosphorylation and expression.</title>
        <authorList>
            <person name="Huttlin E.L."/>
            <person name="Jedrychowski M.P."/>
            <person name="Elias J.E."/>
            <person name="Goswami T."/>
            <person name="Rad R."/>
            <person name="Beausoleil S.A."/>
            <person name="Villen J."/>
            <person name="Haas W."/>
            <person name="Sowa M.E."/>
            <person name="Gygi S.P."/>
        </authorList>
    </citation>
    <scope>IDENTIFICATION BY MASS SPECTROMETRY [LARGE SCALE ANALYSIS]</scope>
    <source>
        <tissue>Brown adipose tissue</tissue>
        <tissue>Heart</tissue>
        <tissue>Testis</tissue>
    </source>
</reference>
<evidence type="ECO:0000250" key="1">
    <source>
        <dbReference type="UniProtKB" id="Q53S58"/>
    </source>
</evidence>
<evidence type="ECO:0000255" key="2"/>
<evidence type="ECO:0000305" key="3"/>
<accession>Q8BPE4</accession>
<gene>
    <name type="primary">Tmem177</name>
</gene>
<name>TM177_MOUSE</name>
<proteinExistence type="evidence at protein level"/>
<keyword id="KW-0472">Membrane</keyword>
<keyword id="KW-0496">Mitochondrion</keyword>
<keyword id="KW-0999">Mitochondrion inner membrane</keyword>
<keyword id="KW-1185">Reference proteome</keyword>
<keyword id="KW-0812">Transmembrane</keyword>
<keyword id="KW-1133">Transmembrane helix</keyword>
<protein>
    <recommendedName>
        <fullName>Transmembrane protein 177</fullName>
    </recommendedName>
</protein>
<comment type="function">
    <text evidence="1">Plays a role in the early steps of cytochrome c oxidase subunit II (MT-CO2/COX2) maturation and is required for the stabilization of COX20 and the newly synthesized MT-CO2/COX2 protein.</text>
</comment>
<comment type="subunit">
    <text evidence="1">Found in a complex with COX20, COA6, MT-CO2/COX2, COX18, SCO1 and SCO2. Interacts with COX20. Interacts with COX1, MT-CO2/COX2, SCO1 and SCO2 in a COX20-dependent manner.</text>
</comment>
<comment type="subcellular location">
    <subcellularLocation>
        <location evidence="1">Mitochondrion inner membrane</location>
        <topology evidence="2">Multi-pass membrane protein</topology>
    </subcellularLocation>
</comment>
<comment type="similarity">
    <text evidence="3">Belongs to the TMEM177 family.</text>
</comment>
<dbReference type="EMBL" id="AK076108">
    <property type="protein sequence ID" value="BAC36188.1"/>
    <property type="molecule type" value="mRNA"/>
</dbReference>
<dbReference type="EMBL" id="BC094344">
    <property type="protein sequence ID" value="AAH94344.1"/>
    <property type="molecule type" value="mRNA"/>
</dbReference>
<dbReference type="EMBL" id="BC131993">
    <property type="protein sequence ID" value="AAI31994.1"/>
    <property type="molecule type" value="mRNA"/>
</dbReference>
<dbReference type="EMBL" id="BC132021">
    <property type="protein sequence ID" value="AAI32022.1"/>
    <property type="molecule type" value="mRNA"/>
</dbReference>
<dbReference type="CCDS" id="CCDS15228.1"/>
<dbReference type="RefSeq" id="NP_780315.1">
    <property type="nucleotide sequence ID" value="NM_175106.4"/>
</dbReference>
<dbReference type="BioGRID" id="211399">
    <property type="interactions" value="1"/>
</dbReference>
<dbReference type="FunCoup" id="Q8BPE4">
    <property type="interactions" value="537"/>
</dbReference>
<dbReference type="STRING" id="10090.ENSMUSP00000042416"/>
<dbReference type="iPTMnet" id="Q8BPE4"/>
<dbReference type="PhosphoSitePlus" id="Q8BPE4"/>
<dbReference type="jPOST" id="Q8BPE4"/>
<dbReference type="PaxDb" id="10090-ENSMUSP00000042416"/>
<dbReference type="PeptideAtlas" id="Q8BPE4"/>
<dbReference type="ProteomicsDB" id="259541"/>
<dbReference type="Pumba" id="Q8BPE4"/>
<dbReference type="Antibodypedia" id="58266">
    <property type="antibodies" value="58 antibodies from 14 providers"/>
</dbReference>
<dbReference type="DNASU" id="66343"/>
<dbReference type="Ensembl" id="ENSMUST00000037906.6">
    <property type="protein sequence ID" value="ENSMUSP00000042416.6"/>
    <property type="gene ID" value="ENSMUSG00000036975.6"/>
</dbReference>
<dbReference type="GeneID" id="66343"/>
<dbReference type="KEGG" id="mmu:66343"/>
<dbReference type="UCSC" id="uc007cja.2">
    <property type="organism name" value="mouse"/>
</dbReference>
<dbReference type="AGR" id="MGI:1913593"/>
<dbReference type="CTD" id="80775"/>
<dbReference type="MGI" id="MGI:1913593">
    <property type="gene designation" value="Tmem177"/>
</dbReference>
<dbReference type="VEuPathDB" id="HostDB:ENSMUSG00000036975"/>
<dbReference type="eggNOG" id="ENOG502QPPU">
    <property type="taxonomic scope" value="Eukaryota"/>
</dbReference>
<dbReference type="GeneTree" id="ENSGT00390000010354"/>
<dbReference type="HOGENOM" id="CLU_074208_0_0_1"/>
<dbReference type="InParanoid" id="Q8BPE4"/>
<dbReference type="OMA" id="HTFGLKY"/>
<dbReference type="OrthoDB" id="110174at2759"/>
<dbReference type="PhylomeDB" id="Q8BPE4"/>
<dbReference type="TreeFam" id="TF328369"/>
<dbReference type="Reactome" id="R-MMU-9864848">
    <property type="pathway name" value="Complex IV assembly"/>
</dbReference>
<dbReference type="BioGRID-ORCS" id="66343">
    <property type="hits" value="2 hits in 78 CRISPR screens"/>
</dbReference>
<dbReference type="PRO" id="PR:Q8BPE4"/>
<dbReference type="Proteomes" id="UP000000589">
    <property type="component" value="Chromosome 1"/>
</dbReference>
<dbReference type="RNAct" id="Q8BPE4">
    <property type="molecule type" value="protein"/>
</dbReference>
<dbReference type="Bgee" id="ENSMUSG00000036975">
    <property type="expression patterns" value="Expressed in interventricular septum and 175 other cell types or tissues"/>
</dbReference>
<dbReference type="GO" id="GO:0005743">
    <property type="term" value="C:mitochondrial inner membrane"/>
    <property type="evidence" value="ECO:0000250"/>
    <property type="project" value="UniProtKB"/>
</dbReference>
<dbReference type="InterPro" id="IPR026620">
    <property type="entry name" value="TMEM177"/>
</dbReference>
<dbReference type="PANTHER" id="PTHR21824">
    <property type="entry name" value="TRANSMEMBRANE PROTEIN 177"/>
    <property type="match status" value="1"/>
</dbReference>
<dbReference type="PANTHER" id="PTHR21824:SF4">
    <property type="entry name" value="TRANSMEMBRANE PROTEIN 177"/>
    <property type="match status" value="1"/>
</dbReference>
<sequence length="311" mass="34067">MAGPLWRAAAFIQRHRTSLLVGSCAGLFGVQISFHLFPDPIVQWLYQYWPQGQPAPLSPHLWSLFQEVLKDIGVPSGHCYKPFTAFTFQPVSAGFPRLPAGAVVGIPAIFLGGPVTNIEHSVIIHGQRVDWQSPAGTRLRDALTMSHNAQKFALAKEVVYLESGVAALQTLPAPACLAGTWAISVGAKHALGLYGGPMSLRTAFNLVAIVVGYVAYTFSKDSLTLALEGWLDRRTASLSAAYVQGGVEFYEKILSGNLALRSLLGRQGEKLYTPSGNIVPRHWFRINHLPYTTRRDSLQQMWRATVSPGRF</sequence>
<organism>
    <name type="scientific">Mus musculus</name>
    <name type="common">Mouse</name>
    <dbReference type="NCBI Taxonomy" id="10090"/>
    <lineage>
        <taxon>Eukaryota</taxon>
        <taxon>Metazoa</taxon>
        <taxon>Chordata</taxon>
        <taxon>Craniata</taxon>
        <taxon>Vertebrata</taxon>
        <taxon>Euteleostomi</taxon>
        <taxon>Mammalia</taxon>
        <taxon>Eutheria</taxon>
        <taxon>Euarchontoglires</taxon>
        <taxon>Glires</taxon>
        <taxon>Rodentia</taxon>
        <taxon>Myomorpha</taxon>
        <taxon>Muroidea</taxon>
        <taxon>Muridae</taxon>
        <taxon>Murinae</taxon>
        <taxon>Mus</taxon>
        <taxon>Mus</taxon>
    </lineage>
</organism>